<reference key="1">
    <citation type="journal article" date="2008" name="J. Bacteriol.">
        <title>The pangenome structure of Escherichia coli: comparative genomic analysis of E. coli commensal and pathogenic isolates.</title>
        <authorList>
            <person name="Rasko D.A."/>
            <person name="Rosovitz M.J."/>
            <person name="Myers G.S.A."/>
            <person name="Mongodin E.F."/>
            <person name="Fricke W.F."/>
            <person name="Gajer P."/>
            <person name="Crabtree J."/>
            <person name="Sebaihia M."/>
            <person name="Thomson N.R."/>
            <person name="Chaudhuri R."/>
            <person name="Henderson I.R."/>
            <person name="Sperandio V."/>
            <person name="Ravel J."/>
        </authorList>
    </citation>
    <scope>NUCLEOTIDE SEQUENCE [LARGE SCALE GENOMIC DNA]</scope>
    <source>
        <strain>HS</strain>
    </source>
</reference>
<name>CDH_ECOHS</name>
<feature type="chain" id="PRO_1000059464" description="CDP-diacylglycerol pyrophosphatase">
    <location>
        <begin position="1"/>
        <end position="251"/>
    </location>
</feature>
<feature type="transmembrane region" description="Helical" evidence="1">
    <location>
        <begin position="4"/>
        <end position="24"/>
    </location>
</feature>
<proteinExistence type="inferred from homology"/>
<sequence length="251" mass="28367">MKKAGLLFLVMIVIAVVAAGIGYWKLTGEESDTLRNIVLEECLPNQQQNQNPSPCAEVKPNAGYVVLKDLNGPLQYLLMPTYRINGTESPLLTDPSTPNFFWLAWQARDFMSKKYGQLVPDRAVSLAINSRTGRTQNHFHIHISCIRPDVREQLDNNLANISSRWLPLPGGLRGHEYLARRVTESELVQRSPFIMLAEEVPEAREHMGSYGLAMVRQSDNSFVLLATQRNLLTLNRASAEEIQDHQCEILR</sequence>
<dbReference type="EC" id="3.6.1.26" evidence="1"/>
<dbReference type="EMBL" id="CP000802">
    <property type="protein sequence ID" value="ABV08327.1"/>
    <property type="molecule type" value="Genomic_DNA"/>
</dbReference>
<dbReference type="RefSeq" id="WP_012136747.1">
    <property type="nucleotide sequence ID" value="NC_009800.1"/>
</dbReference>
<dbReference type="SMR" id="A8A723"/>
<dbReference type="KEGG" id="ecx:EcHS_A4149"/>
<dbReference type="HOGENOM" id="CLU_077117_0_1_6"/>
<dbReference type="UniPathway" id="UPA00609">
    <property type="reaction ID" value="UER00664"/>
</dbReference>
<dbReference type="GO" id="GO:0005886">
    <property type="term" value="C:plasma membrane"/>
    <property type="evidence" value="ECO:0007669"/>
    <property type="project" value="UniProtKB-SubCell"/>
</dbReference>
<dbReference type="GO" id="GO:0008715">
    <property type="term" value="F:CDP-diacylglycerol diphosphatase activity"/>
    <property type="evidence" value="ECO:0007669"/>
    <property type="project" value="UniProtKB-UniRule"/>
</dbReference>
<dbReference type="GO" id="GO:0046342">
    <property type="term" value="P:CDP-diacylglycerol catabolic process"/>
    <property type="evidence" value="ECO:0007669"/>
    <property type="project" value="UniProtKB-UniRule"/>
</dbReference>
<dbReference type="GO" id="GO:0008654">
    <property type="term" value="P:phospholipid biosynthetic process"/>
    <property type="evidence" value="ECO:0007669"/>
    <property type="project" value="UniProtKB-KW"/>
</dbReference>
<dbReference type="Gene3D" id="3.30.428.30">
    <property type="entry name" value="HIT family - CDH-like"/>
    <property type="match status" value="1"/>
</dbReference>
<dbReference type="HAMAP" id="MF_00319">
    <property type="entry name" value="Cdh"/>
    <property type="match status" value="1"/>
</dbReference>
<dbReference type="InterPro" id="IPR003763">
    <property type="entry name" value="CDP-diacylglyc_Pase"/>
</dbReference>
<dbReference type="InterPro" id="IPR015993">
    <property type="entry name" value="CDP-diacylglyc_Pase_proteobac"/>
</dbReference>
<dbReference type="InterPro" id="IPR036265">
    <property type="entry name" value="HIT-like_sf"/>
</dbReference>
<dbReference type="NCBIfam" id="TIGR00672">
    <property type="entry name" value="cdh"/>
    <property type="match status" value="1"/>
</dbReference>
<dbReference type="NCBIfam" id="NF003986">
    <property type="entry name" value="PRK05471.1-5"/>
    <property type="match status" value="1"/>
</dbReference>
<dbReference type="NCBIfam" id="NF003987">
    <property type="entry name" value="PRK05471.1-6"/>
    <property type="match status" value="1"/>
</dbReference>
<dbReference type="Pfam" id="PF02611">
    <property type="entry name" value="CDH"/>
    <property type="match status" value="1"/>
</dbReference>
<dbReference type="PIRSF" id="PIRSF001273">
    <property type="entry name" value="CDH"/>
    <property type="match status" value="1"/>
</dbReference>
<dbReference type="SUPFAM" id="SSF54197">
    <property type="entry name" value="HIT-like"/>
    <property type="match status" value="1"/>
</dbReference>
<evidence type="ECO:0000255" key="1">
    <source>
        <dbReference type="HAMAP-Rule" id="MF_00319"/>
    </source>
</evidence>
<keyword id="KW-0997">Cell inner membrane</keyword>
<keyword id="KW-1003">Cell membrane</keyword>
<keyword id="KW-0378">Hydrolase</keyword>
<keyword id="KW-0444">Lipid biosynthesis</keyword>
<keyword id="KW-0443">Lipid metabolism</keyword>
<keyword id="KW-0472">Membrane</keyword>
<keyword id="KW-0594">Phospholipid biosynthesis</keyword>
<keyword id="KW-1208">Phospholipid metabolism</keyword>
<keyword id="KW-0812">Transmembrane</keyword>
<keyword id="KW-1133">Transmembrane helix</keyword>
<organism>
    <name type="scientific">Escherichia coli O9:H4 (strain HS)</name>
    <dbReference type="NCBI Taxonomy" id="331112"/>
    <lineage>
        <taxon>Bacteria</taxon>
        <taxon>Pseudomonadati</taxon>
        <taxon>Pseudomonadota</taxon>
        <taxon>Gammaproteobacteria</taxon>
        <taxon>Enterobacterales</taxon>
        <taxon>Enterobacteriaceae</taxon>
        <taxon>Escherichia</taxon>
    </lineage>
</organism>
<accession>A8A723</accession>
<gene>
    <name evidence="1" type="primary">cdh</name>
    <name type="ordered locus">EcHS_A4149</name>
</gene>
<comment type="catalytic activity">
    <reaction evidence="1">
        <text>a CDP-1,2-diacyl-sn-glycerol + H2O = a 1,2-diacyl-sn-glycero-3-phosphate + CMP + 2 H(+)</text>
        <dbReference type="Rhea" id="RHEA:15221"/>
        <dbReference type="ChEBI" id="CHEBI:15377"/>
        <dbReference type="ChEBI" id="CHEBI:15378"/>
        <dbReference type="ChEBI" id="CHEBI:58332"/>
        <dbReference type="ChEBI" id="CHEBI:58608"/>
        <dbReference type="ChEBI" id="CHEBI:60377"/>
        <dbReference type="EC" id="3.6.1.26"/>
    </reaction>
</comment>
<comment type="pathway">
    <text evidence="1">Phospholipid metabolism; CDP-diacylglycerol degradation; phosphatidate from CDP-diacylglycerol: step 1/1.</text>
</comment>
<comment type="subcellular location">
    <subcellularLocation>
        <location evidence="1">Cell inner membrane</location>
        <topology evidence="1">Single-pass membrane protein</topology>
    </subcellularLocation>
</comment>
<comment type="similarity">
    <text evidence="1">Belongs to the Cdh family.</text>
</comment>
<protein>
    <recommendedName>
        <fullName evidence="1">CDP-diacylglycerol pyrophosphatase</fullName>
        <ecNumber evidence="1">3.6.1.26</ecNumber>
    </recommendedName>
    <alternativeName>
        <fullName evidence="1">CDP-diacylglycerol phosphatidylhydrolase</fullName>
    </alternativeName>
    <alternativeName>
        <fullName evidence="1">CDP-diglyceride hydrolase</fullName>
    </alternativeName>
</protein>